<dbReference type="EMBL" id="U00096">
    <property type="protein sequence ID" value="AAC74192.2"/>
    <property type="molecule type" value="Genomic_DNA"/>
</dbReference>
<dbReference type="EMBL" id="AP009048">
    <property type="protein sequence ID" value="BAA35915.2"/>
    <property type="molecule type" value="Genomic_DNA"/>
</dbReference>
<dbReference type="PIR" id="A64855">
    <property type="entry name" value="A64855"/>
</dbReference>
<dbReference type="RefSeq" id="NP_415626.4">
    <property type="nucleotide sequence ID" value="NC_000913.3"/>
</dbReference>
<dbReference type="RefSeq" id="WP_000587933.1">
    <property type="nucleotide sequence ID" value="NZ_STEB01000016.1"/>
</dbReference>
<dbReference type="SMR" id="P0A8E1"/>
<dbReference type="BioGRID" id="4261379">
    <property type="interactions" value="282"/>
</dbReference>
<dbReference type="BioGRID" id="850048">
    <property type="interactions" value="4"/>
</dbReference>
<dbReference type="DIP" id="DIP-48123N"/>
<dbReference type="FunCoup" id="P0A8E1">
    <property type="interactions" value="134"/>
</dbReference>
<dbReference type="IntAct" id="P0A8E1">
    <property type="interactions" value="4"/>
</dbReference>
<dbReference type="STRING" id="511145.b1108"/>
<dbReference type="ESTHER" id="ecoli-ycfp">
    <property type="family name" value="abh_upf00227"/>
</dbReference>
<dbReference type="jPOST" id="P0A8E1"/>
<dbReference type="PaxDb" id="511145-b1108"/>
<dbReference type="EnsemblBacteria" id="AAC74192">
    <property type="protein sequence ID" value="AAC74192"/>
    <property type="gene ID" value="b1108"/>
</dbReference>
<dbReference type="GeneID" id="93776300"/>
<dbReference type="GeneID" id="945676"/>
<dbReference type="KEGG" id="ecj:JW5158"/>
<dbReference type="KEGG" id="eco:b1108"/>
<dbReference type="KEGG" id="ecoc:C3026_06685"/>
<dbReference type="PATRIC" id="fig|511145.12.peg.1152"/>
<dbReference type="EchoBASE" id="EB3208"/>
<dbReference type="eggNOG" id="COG3150">
    <property type="taxonomic scope" value="Bacteria"/>
</dbReference>
<dbReference type="HOGENOM" id="CLU_128769_0_0_6"/>
<dbReference type="InParanoid" id="P0A8E1"/>
<dbReference type="OMA" id="KCVSEFR"/>
<dbReference type="OrthoDB" id="6469735at2"/>
<dbReference type="PhylomeDB" id="P0A8E1"/>
<dbReference type="BioCyc" id="EcoCyc:G6568-MONOMER"/>
<dbReference type="PRO" id="PR:P0A8E1"/>
<dbReference type="Proteomes" id="UP000000625">
    <property type="component" value="Chromosome"/>
</dbReference>
<dbReference type="GO" id="GO:0005829">
    <property type="term" value="C:cytosol"/>
    <property type="evidence" value="ECO:0000314"/>
    <property type="project" value="EcoCyc"/>
</dbReference>
<dbReference type="GO" id="GO:0016788">
    <property type="term" value="F:hydrolase activity, acting on ester bonds"/>
    <property type="evidence" value="ECO:0000318"/>
    <property type="project" value="GO_Central"/>
</dbReference>
<dbReference type="FunFam" id="3.40.50.1820:FF:000007">
    <property type="entry name" value="UPF0227 protein YcfP"/>
    <property type="match status" value="1"/>
</dbReference>
<dbReference type="Gene3D" id="3.40.50.1820">
    <property type="entry name" value="alpha/beta hydrolase"/>
    <property type="match status" value="1"/>
</dbReference>
<dbReference type="HAMAP" id="MF_01047">
    <property type="entry name" value="UPF0227"/>
    <property type="match status" value="1"/>
</dbReference>
<dbReference type="InterPro" id="IPR029058">
    <property type="entry name" value="AB_hydrolase_fold"/>
</dbReference>
<dbReference type="InterPro" id="IPR022987">
    <property type="entry name" value="UPF0227"/>
</dbReference>
<dbReference type="InterPro" id="IPR008886">
    <property type="entry name" value="UPF0227/Esterase_YqiA"/>
</dbReference>
<dbReference type="NCBIfam" id="NF003431">
    <property type="entry name" value="PRK04940.1"/>
    <property type="match status" value="1"/>
</dbReference>
<dbReference type="PANTHER" id="PTHR35602">
    <property type="entry name" value="ESTERASE YQIA-RELATED"/>
    <property type="match status" value="1"/>
</dbReference>
<dbReference type="PANTHER" id="PTHR35602:SF2">
    <property type="entry name" value="UPF0227 PROTEIN YCFP"/>
    <property type="match status" value="1"/>
</dbReference>
<dbReference type="Pfam" id="PF05728">
    <property type="entry name" value="UPF0227"/>
    <property type="match status" value="1"/>
</dbReference>
<dbReference type="SUPFAM" id="SSF53474">
    <property type="entry name" value="alpha/beta-Hydrolases"/>
    <property type="match status" value="1"/>
</dbReference>
<keyword id="KW-1185">Reference proteome</keyword>
<gene>
    <name type="primary">ycfP</name>
    <name type="ordered locus">b1108</name>
    <name type="ordered locus">JW5158</name>
</gene>
<feature type="chain" id="PRO_0000070316" description="UPF0227 protein YcfP">
    <location>
        <begin position="1"/>
        <end position="180"/>
    </location>
</feature>
<comment type="interaction">
    <interactant intactId="EBI-9129402">
        <id>P0A8E1</id>
    </interactant>
    <interactant intactId="EBI-1114349">
        <id>P0A805</id>
        <label>frr</label>
    </interactant>
    <organismsDiffer>false</organismsDiffer>
    <experiments>2</experiments>
</comment>
<comment type="interaction">
    <interactant intactId="EBI-9129402">
        <id>P0A8E1</id>
    </interactant>
    <interactant intactId="EBI-369411">
        <id>P0A862</id>
        <label>tpx</label>
    </interactant>
    <organismsDiffer>false</organismsDiffer>
    <experiments>3</experiments>
</comment>
<comment type="similarity">
    <text evidence="1">Belongs to the UPF0227 family.</text>
</comment>
<accession>P0A8E1</accession>
<accession>P75950</accession>
<name>YCFP_ECOLI</name>
<proteinExistence type="evidence at protein level"/>
<protein>
    <recommendedName>
        <fullName>UPF0227 protein YcfP</fullName>
    </recommendedName>
</protein>
<evidence type="ECO:0000305" key="1"/>
<reference key="1">
    <citation type="journal article" date="1996" name="DNA Res.">
        <title>A 718-kb DNA sequence of the Escherichia coli K-12 genome corresponding to the 12.7-28.0 min region on the linkage map.</title>
        <authorList>
            <person name="Oshima T."/>
            <person name="Aiba H."/>
            <person name="Baba T."/>
            <person name="Fujita K."/>
            <person name="Hayashi K."/>
            <person name="Honjo A."/>
            <person name="Ikemoto K."/>
            <person name="Inada T."/>
            <person name="Itoh T."/>
            <person name="Kajihara M."/>
            <person name="Kanai K."/>
            <person name="Kashimoto K."/>
            <person name="Kimura S."/>
            <person name="Kitagawa M."/>
            <person name="Makino K."/>
            <person name="Masuda S."/>
            <person name="Miki T."/>
            <person name="Mizobuchi K."/>
            <person name="Mori H."/>
            <person name="Motomura K."/>
            <person name="Nakamura Y."/>
            <person name="Nashimoto H."/>
            <person name="Nishio Y."/>
            <person name="Saito N."/>
            <person name="Sampei G."/>
            <person name="Seki Y."/>
            <person name="Tagami H."/>
            <person name="Takemoto K."/>
            <person name="Wada C."/>
            <person name="Yamamoto Y."/>
            <person name="Yano M."/>
            <person name="Horiuchi T."/>
        </authorList>
    </citation>
    <scope>NUCLEOTIDE SEQUENCE [LARGE SCALE GENOMIC DNA]</scope>
    <source>
        <strain>K12 / W3110 / ATCC 27325 / DSM 5911</strain>
    </source>
</reference>
<reference key="2">
    <citation type="journal article" date="1997" name="Science">
        <title>The complete genome sequence of Escherichia coli K-12.</title>
        <authorList>
            <person name="Blattner F.R."/>
            <person name="Plunkett G. III"/>
            <person name="Bloch C.A."/>
            <person name="Perna N.T."/>
            <person name="Burland V."/>
            <person name="Riley M."/>
            <person name="Collado-Vides J."/>
            <person name="Glasner J.D."/>
            <person name="Rode C.K."/>
            <person name="Mayhew G.F."/>
            <person name="Gregor J."/>
            <person name="Davis N.W."/>
            <person name="Kirkpatrick H.A."/>
            <person name="Goeden M.A."/>
            <person name="Rose D.J."/>
            <person name="Mau B."/>
            <person name="Shao Y."/>
        </authorList>
    </citation>
    <scope>NUCLEOTIDE SEQUENCE [LARGE SCALE GENOMIC DNA]</scope>
    <source>
        <strain>K12 / MG1655 / ATCC 47076</strain>
    </source>
</reference>
<reference key="3">
    <citation type="journal article" date="2006" name="Mol. Syst. Biol.">
        <title>Highly accurate genome sequences of Escherichia coli K-12 strains MG1655 and W3110.</title>
        <authorList>
            <person name="Hayashi K."/>
            <person name="Morooka N."/>
            <person name="Yamamoto Y."/>
            <person name="Fujita K."/>
            <person name="Isono K."/>
            <person name="Choi S."/>
            <person name="Ohtsubo E."/>
            <person name="Baba T."/>
            <person name="Wanner B.L."/>
            <person name="Mori H."/>
            <person name="Horiuchi T."/>
        </authorList>
    </citation>
    <scope>NUCLEOTIDE SEQUENCE [LARGE SCALE GENOMIC DNA]</scope>
    <source>
        <strain>K12 / W3110 / ATCC 27325 / DSM 5911</strain>
    </source>
</reference>
<organism>
    <name type="scientific">Escherichia coli (strain K12)</name>
    <dbReference type="NCBI Taxonomy" id="83333"/>
    <lineage>
        <taxon>Bacteria</taxon>
        <taxon>Pseudomonadati</taxon>
        <taxon>Pseudomonadota</taxon>
        <taxon>Gammaproteobacteria</taxon>
        <taxon>Enterobacterales</taxon>
        <taxon>Enterobacteriaceae</taxon>
        <taxon>Escherichia</taxon>
    </lineage>
</organism>
<sequence length="180" mass="21226">MIIYLHGFDSNSPGNHEKVLQLQFIDPDVRLISYSTRHPKHDMQHLLKEVDKMLQLNVDERPLICGVGLGGYWAERIGFLCDIRQVIFNPNLFPYENMEGKIDRPEEYADIATKCVTNFREKNRDRCLVILSRNDEALNSQRTSEELHHYYEIVWDEEQTHKFKNISPHLQRIKAFKTLG</sequence>